<proteinExistence type="inferred from homology"/>
<sequence>MSKGQNLQDPFLNTLRKEHVPVSIYLVNGIKLQGKVDSFDQYVIMLKNTVSQMVYKHAISTIVPGRPVRVPHAGESGDEEAE</sequence>
<evidence type="ECO:0000255" key="1">
    <source>
        <dbReference type="HAMAP-Rule" id="MF_00436"/>
    </source>
</evidence>
<evidence type="ECO:0000255" key="2">
    <source>
        <dbReference type="PROSITE-ProRule" id="PRU01346"/>
    </source>
</evidence>
<gene>
    <name evidence="1" type="primary">hfq</name>
    <name type="ordered locus">MCA1983</name>
</gene>
<name>HFQ_METCA</name>
<feature type="chain" id="PRO_0000095650" description="RNA-binding protein Hfq">
    <location>
        <begin position="1"/>
        <end position="82"/>
    </location>
</feature>
<feature type="domain" description="Sm" evidence="2">
    <location>
        <begin position="9"/>
        <end position="68"/>
    </location>
</feature>
<reference key="1">
    <citation type="journal article" date="2004" name="PLoS Biol.">
        <title>Genomic insights into methanotrophy: the complete genome sequence of Methylococcus capsulatus (Bath).</title>
        <authorList>
            <person name="Ward N.L."/>
            <person name="Larsen O."/>
            <person name="Sakwa J."/>
            <person name="Bruseth L."/>
            <person name="Khouri H.M."/>
            <person name="Durkin A.S."/>
            <person name="Dimitrov G."/>
            <person name="Jiang L."/>
            <person name="Scanlan D."/>
            <person name="Kang K.H."/>
            <person name="Lewis M.R."/>
            <person name="Nelson K.E."/>
            <person name="Methe B.A."/>
            <person name="Wu M."/>
            <person name="Heidelberg J.F."/>
            <person name="Paulsen I.T."/>
            <person name="Fouts D.E."/>
            <person name="Ravel J."/>
            <person name="Tettelin H."/>
            <person name="Ren Q."/>
            <person name="Read T.D."/>
            <person name="DeBoy R.T."/>
            <person name="Seshadri R."/>
            <person name="Salzberg S.L."/>
            <person name="Jensen H.B."/>
            <person name="Birkeland N.K."/>
            <person name="Nelson W.C."/>
            <person name="Dodson R.J."/>
            <person name="Grindhaug S.H."/>
            <person name="Holt I.E."/>
            <person name="Eidhammer I."/>
            <person name="Jonasen I."/>
            <person name="Vanaken S."/>
            <person name="Utterback T.R."/>
            <person name="Feldblyum T.V."/>
            <person name="Fraser C.M."/>
            <person name="Lillehaug J.R."/>
            <person name="Eisen J.A."/>
        </authorList>
    </citation>
    <scope>NUCLEOTIDE SEQUENCE [LARGE SCALE GENOMIC DNA]</scope>
    <source>
        <strain>ATCC 33009 / NCIMB 11132 / Bath</strain>
    </source>
</reference>
<organism>
    <name type="scientific">Methylococcus capsulatus (strain ATCC 33009 / NCIMB 11132 / Bath)</name>
    <dbReference type="NCBI Taxonomy" id="243233"/>
    <lineage>
        <taxon>Bacteria</taxon>
        <taxon>Pseudomonadati</taxon>
        <taxon>Pseudomonadota</taxon>
        <taxon>Gammaproteobacteria</taxon>
        <taxon>Methylococcales</taxon>
        <taxon>Methylococcaceae</taxon>
        <taxon>Methylococcus</taxon>
    </lineage>
</organism>
<keyword id="KW-1185">Reference proteome</keyword>
<keyword id="KW-0694">RNA-binding</keyword>
<keyword id="KW-0346">Stress response</keyword>
<dbReference type="EMBL" id="AE017282">
    <property type="protein sequence ID" value="AAU91818.1"/>
    <property type="molecule type" value="Genomic_DNA"/>
</dbReference>
<dbReference type="RefSeq" id="WP_010961228.1">
    <property type="nucleotide sequence ID" value="NC_002977.6"/>
</dbReference>
<dbReference type="SMR" id="Q606N3"/>
<dbReference type="STRING" id="243233.MCA1983"/>
<dbReference type="GeneID" id="88224213"/>
<dbReference type="KEGG" id="mca:MCA1983"/>
<dbReference type="eggNOG" id="COG1923">
    <property type="taxonomic scope" value="Bacteria"/>
</dbReference>
<dbReference type="HOGENOM" id="CLU_113688_2_2_6"/>
<dbReference type="Proteomes" id="UP000006821">
    <property type="component" value="Chromosome"/>
</dbReference>
<dbReference type="GO" id="GO:0005829">
    <property type="term" value="C:cytosol"/>
    <property type="evidence" value="ECO:0007669"/>
    <property type="project" value="TreeGrafter"/>
</dbReference>
<dbReference type="GO" id="GO:0003723">
    <property type="term" value="F:RNA binding"/>
    <property type="evidence" value="ECO:0007669"/>
    <property type="project" value="UniProtKB-UniRule"/>
</dbReference>
<dbReference type="GO" id="GO:0006355">
    <property type="term" value="P:regulation of DNA-templated transcription"/>
    <property type="evidence" value="ECO:0007669"/>
    <property type="project" value="InterPro"/>
</dbReference>
<dbReference type="GO" id="GO:0043487">
    <property type="term" value="P:regulation of RNA stability"/>
    <property type="evidence" value="ECO:0007669"/>
    <property type="project" value="TreeGrafter"/>
</dbReference>
<dbReference type="GO" id="GO:0045974">
    <property type="term" value="P:regulation of translation, ncRNA-mediated"/>
    <property type="evidence" value="ECO:0007669"/>
    <property type="project" value="TreeGrafter"/>
</dbReference>
<dbReference type="CDD" id="cd01716">
    <property type="entry name" value="Hfq"/>
    <property type="match status" value="1"/>
</dbReference>
<dbReference type="FunFam" id="2.30.30.100:FF:000001">
    <property type="entry name" value="RNA-binding protein Hfq"/>
    <property type="match status" value="1"/>
</dbReference>
<dbReference type="Gene3D" id="2.30.30.100">
    <property type="match status" value="1"/>
</dbReference>
<dbReference type="HAMAP" id="MF_00436">
    <property type="entry name" value="Hfq"/>
    <property type="match status" value="1"/>
</dbReference>
<dbReference type="InterPro" id="IPR005001">
    <property type="entry name" value="Hfq"/>
</dbReference>
<dbReference type="InterPro" id="IPR010920">
    <property type="entry name" value="LSM_dom_sf"/>
</dbReference>
<dbReference type="InterPro" id="IPR047575">
    <property type="entry name" value="Sm"/>
</dbReference>
<dbReference type="NCBIfam" id="TIGR02383">
    <property type="entry name" value="Hfq"/>
    <property type="match status" value="1"/>
</dbReference>
<dbReference type="NCBIfam" id="NF001602">
    <property type="entry name" value="PRK00395.1"/>
    <property type="match status" value="1"/>
</dbReference>
<dbReference type="PANTHER" id="PTHR34772">
    <property type="entry name" value="RNA-BINDING PROTEIN HFQ"/>
    <property type="match status" value="1"/>
</dbReference>
<dbReference type="PANTHER" id="PTHR34772:SF1">
    <property type="entry name" value="RNA-BINDING PROTEIN HFQ"/>
    <property type="match status" value="1"/>
</dbReference>
<dbReference type="Pfam" id="PF17209">
    <property type="entry name" value="Hfq"/>
    <property type="match status" value="1"/>
</dbReference>
<dbReference type="SUPFAM" id="SSF50182">
    <property type="entry name" value="Sm-like ribonucleoproteins"/>
    <property type="match status" value="1"/>
</dbReference>
<dbReference type="PROSITE" id="PS52002">
    <property type="entry name" value="SM"/>
    <property type="match status" value="1"/>
</dbReference>
<comment type="function">
    <text evidence="1">RNA chaperone that binds small regulatory RNA (sRNAs) and mRNAs to facilitate mRNA translational regulation in response to envelope stress, environmental stress and changes in metabolite concentrations. Also binds with high specificity to tRNAs.</text>
</comment>
<comment type="subunit">
    <text evidence="1">Homohexamer.</text>
</comment>
<comment type="similarity">
    <text evidence="1">Belongs to the Hfq family.</text>
</comment>
<accession>Q606N3</accession>
<protein>
    <recommendedName>
        <fullName evidence="1">RNA-binding protein Hfq</fullName>
    </recommendedName>
</protein>